<evidence type="ECO:0000255" key="1"/>
<evidence type="ECO:0000256" key="2">
    <source>
        <dbReference type="SAM" id="MobiDB-lite"/>
    </source>
</evidence>
<evidence type="ECO:0000269" key="3">
    <source>
    </source>
</evidence>
<evidence type="ECO:0000269" key="4">
    <source>
    </source>
</evidence>
<evidence type="ECO:0000269" key="5">
    <source>
    </source>
</evidence>
<evidence type="ECO:0000269" key="6">
    <source>
    </source>
</evidence>
<evidence type="ECO:0000269" key="7">
    <source>
    </source>
</evidence>
<evidence type="ECO:0000269" key="8">
    <source>
    </source>
</evidence>
<evidence type="ECO:0000269" key="9">
    <source>
    </source>
</evidence>
<evidence type="ECO:0000269" key="10">
    <source>
    </source>
</evidence>
<evidence type="ECO:0000269" key="11">
    <source>
    </source>
</evidence>
<evidence type="ECO:0000269" key="12">
    <source>
    </source>
</evidence>
<evidence type="ECO:0000269" key="13">
    <source>
    </source>
</evidence>
<evidence type="ECO:0000269" key="14">
    <source>
    </source>
</evidence>
<evidence type="ECO:0000269" key="15">
    <source>
    </source>
</evidence>
<evidence type="ECO:0000303" key="16">
    <source>
    </source>
</evidence>
<evidence type="ECO:0000305" key="17"/>
<feature type="chain" id="PRO_0000193692" description="Chitin synthase B">
    <location>
        <begin position="1"/>
        <end position="916"/>
    </location>
</feature>
<feature type="transmembrane region" description="Helical" evidence="1">
    <location>
        <begin position="544"/>
        <end position="561"/>
    </location>
</feature>
<feature type="transmembrane region" description="Helical" evidence="1">
    <location>
        <begin position="588"/>
        <end position="608"/>
    </location>
</feature>
<feature type="transmembrane region" description="Helical" evidence="1">
    <location>
        <begin position="629"/>
        <end position="649"/>
    </location>
</feature>
<feature type="transmembrane region" description="Helical" evidence="1">
    <location>
        <begin position="664"/>
        <end position="684"/>
    </location>
</feature>
<feature type="transmembrane region" description="Helical" evidence="1">
    <location>
        <begin position="716"/>
        <end position="736"/>
    </location>
</feature>
<feature type="transmembrane region" description="Helical" evidence="1">
    <location>
        <begin position="845"/>
        <end position="865"/>
    </location>
</feature>
<feature type="transmembrane region" description="Helical" evidence="1">
    <location>
        <begin position="884"/>
        <end position="904"/>
    </location>
</feature>
<feature type="region of interest" description="Disordered" evidence="2">
    <location>
        <begin position="1"/>
        <end position="75"/>
    </location>
</feature>
<feature type="region of interest" description="Disordered" evidence="2">
    <location>
        <begin position="118"/>
        <end position="141"/>
    </location>
</feature>
<feature type="compositionally biased region" description="Basic and acidic residues" evidence="2">
    <location>
        <begin position="14"/>
        <end position="26"/>
    </location>
</feature>
<feature type="compositionally biased region" description="Polar residues" evidence="2">
    <location>
        <begin position="59"/>
        <end position="75"/>
    </location>
</feature>
<feature type="sequence conflict" description="In Ref. 1; BAA04807 and 2; BAA11845." evidence="17" ref="1 2">
    <original>AG</original>
    <variation>RR</variation>
    <location>
        <begin position="136"/>
        <end position="137"/>
    </location>
</feature>
<comment type="function">
    <text evidence="3 4 6 13 14 15">Polymerizes chitin, a structural polymer of the cell wall and septum, by transferring the sugar moiety of UDP-GlcNAc to the non-reducing end of the growing chitin polymer (PubMed:9141670). Does not substantially contribute to the rigidity of the cell wall but is necessary for normal hyphal growth and organization (PubMed:11988507, PubMed:12420146, PubMed:7765508, PubMed:8953267). In addition to its functions in the formation of normal cell walls of hyphae, is also involved in conidiophore and conidia development (PubMed:11988507, PubMed:19411617).</text>
</comment>
<comment type="catalytic activity">
    <reaction evidence="15">
        <text>[(1-&gt;4)-N-acetyl-beta-D-glucosaminyl](n) + UDP-N-acetyl-alpha-D-glucosamine = [(1-&gt;4)-N-acetyl-beta-D-glucosaminyl](n+1) + UDP + H(+)</text>
        <dbReference type="Rhea" id="RHEA:16637"/>
        <dbReference type="Rhea" id="RHEA-COMP:9593"/>
        <dbReference type="Rhea" id="RHEA-COMP:9595"/>
        <dbReference type="ChEBI" id="CHEBI:15378"/>
        <dbReference type="ChEBI" id="CHEBI:17029"/>
        <dbReference type="ChEBI" id="CHEBI:57705"/>
        <dbReference type="ChEBI" id="CHEBI:58223"/>
        <dbReference type="EC" id="2.4.1.16"/>
    </reaction>
    <physiologicalReaction direction="left-to-right" evidence="15">
        <dbReference type="Rhea" id="RHEA:16638"/>
    </physiologicalReaction>
</comment>
<comment type="activity regulation">
    <text evidence="14">Activity is stimulated by Mg(2+) and is inhibited by polyoxin D.</text>
</comment>
<comment type="biophysicochemical properties">
    <kinetics>
        <KM evidence="15">1.6 mM for UDP-N-acetyl-alpha-D-glucosamine</KM>
    </kinetics>
    <phDependence>
        <text evidence="15">Optimum pH is 7.5.</text>
    </phDependence>
</comment>
<comment type="subunit">
    <text evidence="7">Interacts with kibesin kinA.</text>
</comment>
<comment type="subcellular location">
    <subcellularLocation>
        <location evidence="6 7 8 9">Cell membrane</location>
        <topology evidence="1">Multi-pass membrane protein</topology>
    </subcellularLocation>
    <subcellularLocation>
        <location evidence="6 7 8 9 10 11 12">Cell tip</location>
    </subcellularLocation>
    <subcellularLocation>
        <location evidence="6 7">Cell septum</location>
    </subcellularLocation>
    <text evidence="6 7 8 9 10">Mainly localizes at the tips of germ tubes, hyphal tips, and forming septa during hyphal growth (PubMed:19411617). Accumulates at the Spitzenkoerper near the hyphal tips (PubMed:29387789, PubMed:31974757). Localization to the hyphal tips depends on conventional kinesin kinA (PubMed:25955346, PubMed:31974757). Polarization occurs by indirect endocytic recycling, involving delivery/exocytosis to apices followed by internalization by the sub-apical endocytic collar of actin patches and subsequent trafficking to TGN cisternae, where it accumulates for about 1 min before being re-delivered to the apex by a RAB11/TRAPPII-dependent pathway (PubMed:29608571). Predominantly localizes at polarized growth sites and between vesicles and metulae, between metulae and phialides, and between phalides and conidia in asexual development (PubMed:19411617).</text>
</comment>
<comment type="induction">
    <text evidence="5">Expression is ubiquitous throughout the fungal body and relatively independent of the change in developmental status of the cells.</text>
</comment>
<comment type="domain">
    <text evidence="12">The N-terminal disordered region controls its phosphorylation state and is required for its proper localization to the hyphal tip, but not essential for septum formation.</text>
</comment>
<comment type="PTM">
    <text evidence="15">Activity requires trypsin activation, suggesting a zymogenic nature.</text>
</comment>
<comment type="PTM">
    <text evidence="12">Phosphorylated at yet unidentified residues in a N-terminal disordered region-dependent manner.</text>
</comment>
<comment type="disruption phenotype">
    <text evidence="3 13 14">Leads to severe hyphal growth defects with enlarged tips, a high degree of branching, and disorganized lateral walls.</text>
</comment>
<comment type="similarity">
    <text evidence="17">Belongs to the chitin synthase family. Class III subfamily.</text>
</comment>
<name>CHSB_EMENI</name>
<accession>Q00757</accession>
<accession>C8VPK2</accession>
<accession>P87326</accession>
<accession>Q5BAA7</accession>
<reference key="1">
    <citation type="journal article" date="1994" name="Biosci. Biotechnol. Biochem.">
        <title>Isolation and characterization of two chitin synthase genes from Aspergillus nidulans.</title>
        <authorList>
            <person name="Yanai K."/>
            <person name="Kojima N."/>
            <person name="Takaya N."/>
            <person name="Horiuchi H."/>
            <person name="Ohta A."/>
            <person name="Takagi M."/>
        </authorList>
    </citation>
    <scope>NUCLEOTIDE SEQUENCE [GENOMIC DNA]</scope>
    <scope>FUNCTION</scope>
    <scope>DISRUPTION PHENOTYPE</scope>
    <source>
        <strain>FGSC 89</strain>
    </source>
</reference>
<reference key="2">
    <citation type="submission" date="1997-02" db="EMBL/GenBank/DDBJ databases">
        <title>Aspergillus nidulans chitin synthase B gene.</title>
        <authorList>
            <person name="Tatsuno K."/>
        </authorList>
    </citation>
    <scope>NUCLEOTIDE SEQUENCE [MRNA]</scope>
    <source>
        <strain>FGSC 89</strain>
    </source>
</reference>
<reference key="3">
    <citation type="journal article" date="2005" name="Nature">
        <title>Sequencing of Aspergillus nidulans and comparative analysis with A. fumigatus and A. oryzae.</title>
        <authorList>
            <person name="Galagan J.E."/>
            <person name="Calvo S.E."/>
            <person name="Cuomo C."/>
            <person name="Ma L.-J."/>
            <person name="Wortman J.R."/>
            <person name="Batzoglou S."/>
            <person name="Lee S.-I."/>
            <person name="Bastuerkmen M."/>
            <person name="Spevak C.C."/>
            <person name="Clutterbuck J."/>
            <person name="Kapitonov V."/>
            <person name="Jurka J."/>
            <person name="Scazzocchio C."/>
            <person name="Farman M.L."/>
            <person name="Butler J."/>
            <person name="Purcell S."/>
            <person name="Harris S."/>
            <person name="Braus G.H."/>
            <person name="Draht O."/>
            <person name="Busch S."/>
            <person name="D'Enfert C."/>
            <person name="Bouchier C."/>
            <person name="Goldman G.H."/>
            <person name="Bell-Pedersen D."/>
            <person name="Griffiths-Jones S."/>
            <person name="Doonan J.H."/>
            <person name="Yu J."/>
            <person name="Vienken K."/>
            <person name="Pain A."/>
            <person name="Freitag M."/>
            <person name="Selker E.U."/>
            <person name="Archer D.B."/>
            <person name="Penalva M.A."/>
            <person name="Oakley B.R."/>
            <person name="Momany M."/>
            <person name="Tanaka T."/>
            <person name="Kumagai T."/>
            <person name="Asai K."/>
            <person name="Machida M."/>
            <person name="Nierman W.C."/>
            <person name="Denning D.W."/>
            <person name="Caddick M.X."/>
            <person name="Hynes M."/>
            <person name="Paoletti M."/>
            <person name="Fischer R."/>
            <person name="Miller B.L."/>
            <person name="Dyer P.S."/>
            <person name="Sachs M.S."/>
            <person name="Osmani S.A."/>
            <person name="Birren B.W."/>
        </authorList>
    </citation>
    <scope>NUCLEOTIDE SEQUENCE [LARGE SCALE GENOMIC DNA]</scope>
    <source>
        <strain>FGSC A4 / ATCC 38163 / CBS 112.46 / NRRL 194 / M139</strain>
    </source>
</reference>
<reference key="4">
    <citation type="journal article" date="2009" name="Fungal Genet. Biol.">
        <title>The 2008 update of the Aspergillus nidulans genome annotation: a community effort.</title>
        <authorList>
            <person name="Wortman J.R."/>
            <person name="Gilsenan J.M."/>
            <person name="Joardar V."/>
            <person name="Deegan J."/>
            <person name="Clutterbuck J."/>
            <person name="Andersen M.R."/>
            <person name="Archer D."/>
            <person name="Bencina M."/>
            <person name="Braus G."/>
            <person name="Coutinho P."/>
            <person name="von Dohren H."/>
            <person name="Doonan J."/>
            <person name="Driessen A.J."/>
            <person name="Durek P."/>
            <person name="Espeso E."/>
            <person name="Fekete E."/>
            <person name="Flipphi M."/>
            <person name="Estrada C.G."/>
            <person name="Geysens S."/>
            <person name="Goldman G."/>
            <person name="de Groot P.W."/>
            <person name="Hansen K."/>
            <person name="Harris S.D."/>
            <person name="Heinekamp T."/>
            <person name="Helmstaedt K."/>
            <person name="Henrissat B."/>
            <person name="Hofmann G."/>
            <person name="Homan T."/>
            <person name="Horio T."/>
            <person name="Horiuchi H."/>
            <person name="James S."/>
            <person name="Jones M."/>
            <person name="Karaffa L."/>
            <person name="Karanyi Z."/>
            <person name="Kato M."/>
            <person name="Keller N."/>
            <person name="Kelly D.E."/>
            <person name="Kiel J.A."/>
            <person name="Kim J.M."/>
            <person name="van der Klei I.J."/>
            <person name="Klis F.M."/>
            <person name="Kovalchuk A."/>
            <person name="Krasevec N."/>
            <person name="Kubicek C.P."/>
            <person name="Liu B."/>
            <person name="Maccabe A."/>
            <person name="Meyer V."/>
            <person name="Mirabito P."/>
            <person name="Miskei M."/>
            <person name="Mos M."/>
            <person name="Mullins J."/>
            <person name="Nelson D.R."/>
            <person name="Nielsen J."/>
            <person name="Oakley B.R."/>
            <person name="Osmani S.A."/>
            <person name="Pakula T."/>
            <person name="Paszewski A."/>
            <person name="Paulsen I."/>
            <person name="Pilsyk S."/>
            <person name="Pocsi I."/>
            <person name="Punt P.J."/>
            <person name="Ram A.F."/>
            <person name="Ren Q."/>
            <person name="Robellet X."/>
            <person name="Robson G."/>
            <person name="Seiboth B."/>
            <person name="van Solingen P."/>
            <person name="Specht T."/>
            <person name="Sun J."/>
            <person name="Taheri-Talesh N."/>
            <person name="Takeshita N."/>
            <person name="Ussery D."/>
            <person name="vanKuyk P.A."/>
            <person name="Visser H."/>
            <person name="van de Vondervoort P.J."/>
            <person name="de Vries R.P."/>
            <person name="Walton J."/>
            <person name="Xiang X."/>
            <person name="Xiong Y."/>
            <person name="Zeng A.P."/>
            <person name="Brandt B.W."/>
            <person name="Cornell M.J."/>
            <person name="van den Hondel C.A."/>
            <person name="Visser J."/>
            <person name="Oliver S.G."/>
            <person name="Turner G."/>
        </authorList>
    </citation>
    <scope>GENOME REANNOTATION</scope>
    <source>
        <strain>FGSC A4 / ATCC 38163 / CBS 112.46 / NRRL 194 / M139</strain>
    </source>
</reference>
<reference key="5">
    <citation type="journal article" date="1996" name="Fungal Genet. Biol.">
        <title>The chsB gene of Aspergillus nidulans is necessary for normal hyphal growth and development.</title>
        <authorList>
            <person name="Borgia P.T."/>
            <person name="Iartchouk N."/>
            <person name="Riggle P.J."/>
            <person name="Winter K.R."/>
            <person name="Koltin Y."/>
            <person name="Bulawa C.E."/>
        </authorList>
    </citation>
    <scope>FUNCTION</scope>
    <scope>DISRUPTION PHENOTYPE</scope>
</reference>
<reference key="6">
    <citation type="journal article" date="1997" name="FEMS Microbiol. Lett.">
        <title>Properties of yeast expressed Aspergillus nidulans chitin synthase B which is essential for hyphal growth.</title>
        <authorList>
            <person name="Tatsuno K."/>
            <person name="Yamada-Okabe H."/>
            <person name="Takagi M."/>
            <person name="Arisawa M."/>
            <person name="Sudoh M."/>
        </authorList>
    </citation>
    <scope>FUNCTION</scope>
    <scope>CATALYTIC ACTIVITY</scope>
    <scope>ACTIVITY REGULATION</scope>
    <scope>BIOPHYSICOCHEMICAL PROPERTIES</scope>
    <scope>ZYMOGEN</scope>
</reference>
<reference key="7">
    <citation type="journal article" date="2002" name="Curr. Genet.">
        <title>Different functions of the class I and class II chitin synthase genes, chsC and chsA, are revealed by repression of chsB expression in Aspergillus nidulans.</title>
        <authorList>
            <person name="Ichinomiya M."/>
            <person name="Horiuchi H."/>
            <person name="Ohta A."/>
        </authorList>
    </citation>
    <scope>FUNCTION</scope>
</reference>
<reference key="8">
    <citation type="journal article" date="2002" name="Microbiology">
        <title>Repression of chsB expression reveals the functional importance of class IV chitin synthase gene chsD in hyphal growth and conidiation of Aspergillus nidulans.</title>
        <authorList>
            <person name="Ichinomiya M."/>
            <person name="Motoyama T."/>
            <person name="Fujiwara M."/>
            <person name="Takagi M."/>
            <person name="Horiuchi H."/>
            <person name="Ohta A."/>
        </authorList>
    </citation>
    <scope>FUNCTION</scope>
    <scope>DISRUPTION PHENOTYPE</scope>
</reference>
<reference key="9">
    <citation type="journal article" date="2004" name="Fungal Genet. Biol.">
        <title>Differential expression of the chitin synthase genes of Aspergillus nidulans, chsA, chsB, and chsC, in response to developmental status and environmental factors.</title>
        <authorList>
            <person name="Lee J.I."/>
            <person name="Choi J.H."/>
            <person name="Park B.C."/>
            <person name="Park Y.H."/>
            <person name="Lee M.Y."/>
            <person name="Park H.M."/>
            <person name="Maeng P.J."/>
        </authorList>
    </citation>
    <scope>INDUCTION</scope>
</reference>
<reference key="10">
    <citation type="journal article" date="2009" name="Eukaryot. Cell">
        <title>Class III chitin synthase ChsB of Aspergillus nidulans localizes at the sites of polarized cell wall synthesis and is required for conidial development.</title>
        <authorList>
            <person name="Fukuda K."/>
            <person name="Yamada K."/>
            <person name="Deoka K."/>
            <person name="Yamashita S."/>
            <person name="Ohta A."/>
            <person name="Horiuchi H."/>
        </authorList>
    </citation>
    <scope>FUNCTION</scope>
    <scope>SUBCELLULAR LOCATION</scope>
</reference>
<reference key="11">
    <citation type="journal article" date="2015" name="PLoS ONE">
        <title>Transportation of Aspergillus nidulans Class III and V Chitin Synthases to the Hyphal Tips Depends on Conventional Kinesin.</title>
        <authorList>
            <person name="Takeshita N."/>
            <person name="Wernet V."/>
            <person name="Tsuizaki M."/>
            <person name="Gruen N."/>
            <person name="Hoshi H.O."/>
            <person name="Ohta A."/>
            <person name="Fischer R."/>
            <person name="Horiuchi H."/>
        </authorList>
    </citation>
    <scope>SUBCELLULAR LOCATION</scope>
    <scope>INTERACTION WITH KINA</scope>
</reference>
<reference key="12">
    <citation type="journal article" date="2018" name="PLoS Genet.">
        <title>Endocytic recycling via the TGN underlies the polarized hyphal mode of life.</title>
        <authorList>
            <person name="Hernandez-Gonzalez M."/>
            <person name="Bravo-Plaza I."/>
            <person name="Pinar M."/>
            <person name="de Los Rios V."/>
            <person name="Arst H.N. Jr."/>
            <person name="Penalva M.A."/>
        </authorList>
    </citation>
    <scope>SUBCELLULAR LOCATION</scope>
</reference>
<reference key="13">
    <citation type="journal article" date="2018" name="Sci. Adv.">
        <title>Superresolution and pulse-chase imaging reveal the role of vesicle transport in polar growth of fungal cells.</title>
        <authorList>
            <person name="Zhou L."/>
            <person name="Evangelinos M."/>
            <person name="Wernet V."/>
            <person name="Eckert A.F."/>
            <person name="Ishitsuka Y."/>
            <person name="Fischer R."/>
            <person name="Nienhaus G.U."/>
            <person name="Takeshita N."/>
        </authorList>
    </citation>
    <scope>SUBCELLULAR LOCATION</scope>
</reference>
<reference key="14">
    <citation type="journal article" date="2020" name="Curr. Top. Microbiol. Immunol.">
        <title>Control of actin and calcium for chitin synthase delivery to the hyphal tip of Aspergillus.</title>
        <authorList>
            <person name="Takeshita N."/>
        </authorList>
    </citation>
    <scope>FUNCTION</scope>
    <scope>SUBCELLULAR LOCATION</scope>
</reference>
<reference key="15">
    <citation type="journal article" date="2021" name="Fungal Biol.">
        <title>AP-2 complex contributes to hyphal-tip-localization of a chitin synthase in the filamentous fungus Aspergillus nidulans.</title>
        <authorList>
            <person name="Jin J."/>
            <person name="Iwama R."/>
            <person name="Takagi K."/>
            <person name="Horiuchi H."/>
        </authorList>
    </citation>
    <scope>SUBCELLULAR LOCATION</scope>
</reference>
<reference key="16">
    <citation type="journal article" date="2023" name="Curr. Genet.">
        <title>The N-terminal disordered region of ChsB regulates its efficient transport to the hyphal apical surface in Aspergillus nidulans.</title>
        <authorList>
            <person name="Jin J."/>
            <person name="Iwama R."/>
            <person name="Horiuchi H."/>
        </authorList>
    </citation>
    <scope>DOMAIN</scope>
    <scope>PHOSPHORYLATION</scope>
    <scope>SUBCELLULAR LOCATION</scope>
</reference>
<gene>
    <name evidence="16" type="primary">chsB</name>
    <name type="ORF">AN2523</name>
</gene>
<keyword id="KW-1003">Cell membrane</keyword>
<keyword id="KW-0961">Cell wall biogenesis/degradation</keyword>
<keyword id="KW-0328">Glycosyltransferase</keyword>
<keyword id="KW-0472">Membrane</keyword>
<keyword id="KW-1185">Reference proteome</keyword>
<keyword id="KW-0808">Transferase</keyword>
<keyword id="KW-0812">Transmembrane</keyword>
<keyword id="KW-1133">Transmembrane helix</keyword>
<keyword id="KW-0865">Zymogen</keyword>
<sequence>MAYHGSGPQSPGEHTYDDGHQLRDLSHSNTSYEEEASHGLLSSQQSPFAGPFDDPHQQRGLTASPVQRPTSGYSLTESYAPDAAYHDPYSANQSVYSGHSENPAAAFGVPGRVASPYARSETSSTEAWRQRQAGAAGGGNGLRRYATRKVKLVQGSVLSVDYPVPSAIQNAIQAKYRNDLEGGSEEFTHMRYTAATCDPNEFTLHNGYNLRPAMYNRHTELLIAITYYNEDKTLTARTLHGVMQNIRDIVNLKKSEFWNKGGPAWQKIVVCLVFDGIDPCDKDTLDVLATVGIYQDGVMKRDVDGKETVAHIFEYTTQLSVTPNQQLIRPTDDGPSTLPPVQMMFCLKQKNSKKINSHRWLFNAFGRILNPEVCILLDAGTKPGPKSLLYLWEAFYNDKDLGGACGEIHAMLGKGWKKLLNPLVAAQNFEYKISNILDKPLESSFGYVSVLPGAFSAYRFRAIMGRPLEQYFHGDHTLSKQLGKKGIEGMNIFKKNMFLAEDRILCFELVAKAGSKWHLSYVKASKGETDVPEGAPEFISQRRRWLNGSFAAGIYSLMHFGRMYKSGHNIVRMFFLHLQMLYNWFSTFLTWFSLASYWLTTSVIMDLVGTPSSSNGYTAFPFGKTATPIINTLVKYIYLAFLLLQFILALGNRPKGSKLSYLASFVAFGIIQLYVVVDALYLVVRAFTGGAPMDFNTDDGIGAFLSSFFGSSGAGIIIIALAATFGLYFVASFMYLDPWHMFTSFPAYMAVQSSYINILNVYAFSNWHDVSWGTKGSDKADALPSAKTTGGKGEEAVIEEIDKPQADIDSQFEATVKRALTPYVPPEEKEEKSLDDSYKSFRTRLVTLWLFSNGLLAVCITSEGLDKFGFTNTSTERTSRFFQALLWSNAVVALIRFIGATWFLGKTGLLCCFARR</sequence>
<organism>
    <name type="scientific">Emericella nidulans (strain FGSC A4 / ATCC 38163 / CBS 112.46 / NRRL 194 / M139)</name>
    <name type="common">Aspergillus nidulans</name>
    <dbReference type="NCBI Taxonomy" id="227321"/>
    <lineage>
        <taxon>Eukaryota</taxon>
        <taxon>Fungi</taxon>
        <taxon>Dikarya</taxon>
        <taxon>Ascomycota</taxon>
        <taxon>Pezizomycotina</taxon>
        <taxon>Eurotiomycetes</taxon>
        <taxon>Eurotiomycetidae</taxon>
        <taxon>Eurotiales</taxon>
        <taxon>Aspergillaceae</taxon>
        <taxon>Aspergillus</taxon>
        <taxon>Aspergillus subgen. Nidulantes</taxon>
    </lineage>
</organism>
<protein>
    <recommendedName>
        <fullName evidence="16">Chitin synthase B</fullName>
        <ecNumber evidence="14">2.4.1.16</ecNumber>
    </recommendedName>
    <alternativeName>
        <fullName evidence="16">Chitin-UDP acetyl-glucosaminyl transferase B</fullName>
    </alternativeName>
    <alternativeName>
        <fullName evidence="16">Class-III chitin synthase B</fullName>
    </alternativeName>
</protein>
<proteinExistence type="evidence at protein level"/>
<dbReference type="EC" id="2.4.1.16" evidence="14"/>
<dbReference type="EMBL" id="D21269">
    <property type="protein sequence ID" value="BAA04807.1"/>
    <property type="molecule type" value="Genomic_DNA"/>
</dbReference>
<dbReference type="EMBL" id="D83216">
    <property type="protein sequence ID" value="BAA11845.1"/>
    <property type="molecule type" value="mRNA"/>
</dbReference>
<dbReference type="EMBL" id="AACD01000043">
    <property type="protein sequence ID" value="EAA64628.1"/>
    <property type="molecule type" value="Genomic_DNA"/>
</dbReference>
<dbReference type="EMBL" id="BN001307">
    <property type="protein sequence ID" value="CBF87020.1"/>
    <property type="molecule type" value="Genomic_DNA"/>
</dbReference>
<dbReference type="PIR" id="JC2315">
    <property type="entry name" value="JC2315"/>
</dbReference>
<dbReference type="RefSeq" id="XP_660127.1">
    <property type="nucleotide sequence ID" value="XM_655035.1"/>
</dbReference>
<dbReference type="SMR" id="Q00757"/>
<dbReference type="STRING" id="227321.Q00757"/>
<dbReference type="CAZy" id="GT2">
    <property type="family name" value="Glycosyltransferase Family 2"/>
</dbReference>
<dbReference type="EnsemblFungi" id="CBF87020">
    <property type="protein sequence ID" value="CBF87020"/>
    <property type="gene ID" value="ANIA_02523"/>
</dbReference>
<dbReference type="KEGG" id="ani:ANIA_02523"/>
<dbReference type="VEuPathDB" id="FungiDB:AN2523"/>
<dbReference type="eggNOG" id="KOG2571">
    <property type="taxonomic scope" value="Eukaryota"/>
</dbReference>
<dbReference type="HOGENOM" id="CLU_004760_0_1_1"/>
<dbReference type="InParanoid" id="Q00757"/>
<dbReference type="OMA" id="WHLTYIK"/>
<dbReference type="OrthoDB" id="26569at2759"/>
<dbReference type="BRENDA" id="2.4.1.16">
    <property type="organism ID" value="517"/>
</dbReference>
<dbReference type="Proteomes" id="UP000000560">
    <property type="component" value="Chromosome VII"/>
</dbReference>
<dbReference type="GO" id="GO:0071944">
    <property type="term" value="C:cell periphery"/>
    <property type="evidence" value="ECO:0000318"/>
    <property type="project" value="GO_Central"/>
</dbReference>
<dbReference type="GO" id="GO:0030428">
    <property type="term" value="C:cell septum"/>
    <property type="evidence" value="ECO:0000314"/>
    <property type="project" value="AspGD"/>
</dbReference>
<dbReference type="GO" id="GO:0001411">
    <property type="term" value="C:hyphal tip"/>
    <property type="evidence" value="ECO:0000314"/>
    <property type="project" value="AspGD"/>
</dbReference>
<dbReference type="GO" id="GO:0016020">
    <property type="term" value="C:membrane"/>
    <property type="evidence" value="ECO:0000314"/>
    <property type="project" value="AspGD"/>
</dbReference>
<dbReference type="GO" id="GO:0005886">
    <property type="term" value="C:plasma membrane"/>
    <property type="evidence" value="ECO:0007669"/>
    <property type="project" value="UniProtKB-SubCell"/>
</dbReference>
<dbReference type="GO" id="GO:0000934">
    <property type="term" value="C:porous cell septum"/>
    <property type="evidence" value="ECO:0000314"/>
    <property type="project" value="AspGD"/>
</dbReference>
<dbReference type="GO" id="GO:0004100">
    <property type="term" value="F:chitin synthase activity"/>
    <property type="evidence" value="ECO:0000314"/>
    <property type="project" value="AspGD"/>
</dbReference>
<dbReference type="GO" id="GO:0071555">
    <property type="term" value="P:cell wall organization"/>
    <property type="evidence" value="ECO:0007669"/>
    <property type="project" value="UniProtKB-KW"/>
</dbReference>
<dbReference type="GO" id="GO:0006031">
    <property type="term" value="P:chitin biosynthetic process"/>
    <property type="evidence" value="ECO:0000318"/>
    <property type="project" value="GO_Central"/>
</dbReference>
<dbReference type="GO" id="GO:0048315">
    <property type="term" value="P:conidium formation"/>
    <property type="evidence" value="ECO:0000315"/>
    <property type="project" value="AspGD"/>
</dbReference>
<dbReference type="GO" id="GO:0030448">
    <property type="term" value="P:hyphal growth"/>
    <property type="evidence" value="ECO:0000315"/>
    <property type="project" value="AspGD"/>
</dbReference>
<dbReference type="CDD" id="cd04190">
    <property type="entry name" value="Chitin_synth_C"/>
    <property type="match status" value="1"/>
</dbReference>
<dbReference type="InterPro" id="IPR004835">
    <property type="entry name" value="Chitin_synth"/>
</dbReference>
<dbReference type="InterPro" id="IPR004834">
    <property type="entry name" value="Chitin_synth_fun"/>
</dbReference>
<dbReference type="InterPro" id="IPR013616">
    <property type="entry name" value="Chitin_synth_N"/>
</dbReference>
<dbReference type="InterPro" id="IPR029044">
    <property type="entry name" value="Nucleotide-diphossugar_trans"/>
</dbReference>
<dbReference type="PANTHER" id="PTHR22914">
    <property type="entry name" value="CHITIN SYNTHASE"/>
    <property type="match status" value="1"/>
</dbReference>
<dbReference type="PANTHER" id="PTHR22914:SF11">
    <property type="entry name" value="CHITIN SYNTHASE B"/>
    <property type="match status" value="1"/>
</dbReference>
<dbReference type="Pfam" id="PF01644">
    <property type="entry name" value="Chitin_synth_1"/>
    <property type="match status" value="1"/>
</dbReference>
<dbReference type="Pfam" id="PF08407">
    <property type="entry name" value="Chitin_synth_1N"/>
    <property type="match status" value="1"/>
</dbReference>
<dbReference type="SUPFAM" id="SSF53448">
    <property type="entry name" value="Nucleotide-diphospho-sugar transferases"/>
    <property type="match status" value="1"/>
</dbReference>